<proteinExistence type="inferred from homology"/>
<keyword id="KW-0028">Amino-acid biosynthesis</keyword>
<keyword id="KW-0378">Hydrolase</keyword>
<keyword id="KW-0460">Magnesium</keyword>
<keyword id="KW-0479">Metal-binding</keyword>
<keyword id="KW-0486">Methionine biosynthesis</keyword>
<name>MTNC_LEPBL</name>
<sequence>MDFEIYLFDIEGTTTPIEFVHKILFPYSVGKFETFFRSNSLERKWIEKLLEEGKRDSTYSRQLTDSPQNLSDYCKYLVSVDRKSGPLKEIQGRIWKHGYENGELKSSLFADVPSFLKRIQSAKKKSAVYSSGSIEAQKLIFKYSDFGDLTEYFSAYFDTGVGGKRESASYSRIAEQLGIAPEKILFFTDIKEEADAARNAEFKTTLLERPGNAPQPKHSHPKISSFENFNP</sequence>
<dbReference type="EC" id="3.1.3.77" evidence="1"/>
<dbReference type="EMBL" id="CP000348">
    <property type="protein sequence ID" value="ABJ79608.1"/>
    <property type="molecule type" value="Genomic_DNA"/>
</dbReference>
<dbReference type="RefSeq" id="WP_011670637.1">
    <property type="nucleotide sequence ID" value="NC_008508.1"/>
</dbReference>
<dbReference type="SMR" id="Q04Z87"/>
<dbReference type="KEGG" id="lbl:LBL_2200"/>
<dbReference type="HOGENOM" id="CLU_023273_0_0_12"/>
<dbReference type="UniPathway" id="UPA00904">
    <property type="reaction ID" value="UER00876"/>
</dbReference>
<dbReference type="UniPathway" id="UPA00904">
    <property type="reaction ID" value="UER00877"/>
</dbReference>
<dbReference type="GO" id="GO:0043715">
    <property type="term" value="F:2,3-diketo-5-methylthiopentyl-1-phosphate enolase activity"/>
    <property type="evidence" value="ECO:0007669"/>
    <property type="project" value="UniProtKB-UniRule"/>
</dbReference>
<dbReference type="GO" id="GO:0043716">
    <property type="term" value="F:2-hydroxy-3-keto-5-methylthiopentenyl-1-phosphate phosphatase activity"/>
    <property type="evidence" value="ECO:0007669"/>
    <property type="project" value="UniProtKB-UniRule"/>
</dbReference>
<dbReference type="GO" id="GO:0043874">
    <property type="term" value="F:acireductone synthase activity"/>
    <property type="evidence" value="ECO:0007669"/>
    <property type="project" value="UniProtKB-EC"/>
</dbReference>
<dbReference type="GO" id="GO:0000287">
    <property type="term" value="F:magnesium ion binding"/>
    <property type="evidence" value="ECO:0007669"/>
    <property type="project" value="UniProtKB-UniRule"/>
</dbReference>
<dbReference type="GO" id="GO:0019509">
    <property type="term" value="P:L-methionine salvage from methylthioadenosine"/>
    <property type="evidence" value="ECO:0007669"/>
    <property type="project" value="UniProtKB-UniRule"/>
</dbReference>
<dbReference type="CDD" id="cd01629">
    <property type="entry name" value="HAD_EP"/>
    <property type="match status" value="1"/>
</dbReference>
<dbReference type="FunFam" id="3.40.50.1000:FF:000079">
    <property type="entry name" value="Enolase-phosphatase E1"/>
    <property type="match status" value="1"/>
</dbReference>
<dbReference type="Gene3D" id="1.10.720.60">
    <property type="match status" value="1"/>
</dbReference>
<dbReference type="Gene3D" id="3.40.50.1000">
    <property type="entry name" value="HAD superfamily/HAD-like"/>
    <property type="match status" value="1"/>
</dbReference>
<dbReference type="HAMAP" id="MF_01681">
    <property type="entry name" value="Salvage_MtnC"/>
    <property type="match status" value="1"/>
</dbReference>
<dbReference type="InterPro" id="IPR023943">
    <property type="entry name" value="Enolase-ppase_E1"/>
</dbReference>
<dbReference type="InterPro" id="IPR036412">
    <property type="entry name" value="HAD-like_sf"/>
</dbReference>
<dbReference type="InterPro" id="IPR006439">
    <property type="entry name" value="HAD-SF_hydro_IA"/>
</dbReference>
<dbReference type="InterPro" id="IPR023214">
    <property type="entry name" value="HAD_sf"/>
</dbReference>
<dbReference type="NCBIfam" id="TIGR01691">
    <property type="entry name" value="enolase-ppase"/>
    <property type="match status" value="1"/>
</dbReference>
<dbReference type="NCBIfam" id="TIGR01549">
    <property type="entry name" value="HAD-SF-IA-v1"/>
    <property type="match status" value="1"/>
</dbReference>
<dbReference type="PANTHER" id="PTHR20371">
    <property type="entry name" value="ENOLASE-PHOSPHATASE E1"/>
    <property type="match status" value="1"/>
</dbReference>
<dbReference type="PANTHER" id="PTHR20371:SF1">
    <property type="entry name" value="ENOLASE-PHOSPHATASE E1"/>
    <property type="match status" value="1"/>
</dbReference>
<dbReference type="Pfam" id="PF00702">
    <property type="entry name" value="Hydrolase"/>
    <property type="match status" value="1"/>
</dbReference>
<dbReference type="PRINTS" id="PR00413">
    <property type="entry name" value="HADHALOGNASE"/>
</dbReference>
<dbReference type="SFLD" id="SFLDF00044">
    <property type="entry name" value="enolase-phosphatase"/>
    <property type="match status" value="1"/>
</dbReference>
<dbReference type="SFLD" id="SFLDS00003">
    <property type="entry name" value="Haloacid_Dehalogenase"/>
    <property type="match status" value="1"/>
</dbReference>
<dbReference type="SUPFAM" id="SSF56784">
    <property type="entry name" value="HAD-like"/>
    <property type="match status" value="1"/>
</dbReference>
<accession>Q04Z87</accession>
<protein>
    <recommendedName>
        <fullName evidence="1">Enolase-phosphatase E1</fullName>
        <ecNumber evidence="1">3.1.3.77</ecNumber>
    </recommendedName>
    <alternativeName>
        <fullName evidence="1">2,3-diketo-5-methylthio-1-phosphopentane phosphatase</fullName>
    </alternativeName>
</protein>
<organism>
    <name type="scientific">Leptospira borgpetersenii serovar Hardjo-bovis (strain L550)</name>
    <dbReference type="NCBI Taxonomy" id="355276"/>
    <lineage>
        <taxon>Bacteria</taxon>
        <taxon>Pseudomonadati</taxon>
        <taxon>Spirochaetota</taxon>
        <taxon>Spirochaetia</taxon>
        <taxon>Leptospirales</taxon>
        <taxon>Leptospiraceae</taxon>
        <taxon>Leptospira</taxon>
    </lineage>
</organism>
<feature type="chain" id="PRO_0000357378" description="Enolase-phosphatase E1">
    <location>
        <begin position="1"/>
        <end position="231"/>
    </location>
</feature>
<feature type="region of interest" description="Disordered" evidence="2">
    <location>
        <begin position="206"/>
        <end position="231"/>
    </location>
</feature>
<gene>
    <name evidence="1" type="primary">mtnC</name>
    <name type="ordered locus">LBL_2200</name>
</gene>
<evidence type="ECO:0000255" key="1">
    <source>
        <dbReference type="HAMAP-Rule" id="MF_01681"/>
    </source>
</evidence>
<evidence type="ECO:0000256" key="2">
    <source>
        <dbReference type="SAM" id="MobiDB-lite"/>
    </source>
</evidence>
<comment type="function">
    <text evidence="1">Bifunctional enzyme that catalyzes the enolization of 2,3-diketo-5-methylthiopentyl-1-phosphate (DK-MTP-1-P) into the intermediate 2-hydroxy-3-keto-5-methylthiopentenyl-1-phosphate (HK-MTPenyl-1-P), which is then dephosphorylated to form the acireductone 1,2-dihydroxy-3-keto-5-methylthiopentene (DHK-MTPene).</text>
</comment>
<comment type="catalytic activity">
    <reaction evidence="1">
        <text>5-methylsulfanyl-2,3-dioxopentyl phosphate + H2O = 1,2-dihydroxy-5-(methylsulfanyl)pent-1-en-3-one + phosphate</text>
        <dbReference type="Rhea" id="RHEA:21700"/>
        <dbReference type="ChEBI" id="CHEBI:15377"/>
        <dbReference type="ChEBI" id="CHEBI:43474"/>
        <dbReference type="ChEBI" id="CHEBI:49252"/>
        <dbReference type="ChEBI" id="CHEBI:58828"/>
        <dbReference type="EC" id="3.1.3.77"/>
    </reaction>
</comment>
<comment type="cofactor">
    <cofactor evidence="1">
        <name>Mg(2+)</name>
        <dbReference type="ChEBI" id="CHEBI:18420"/>
    </cofactor>
    <text evidence="1">Binds 1 Mg(2+) ion per subunit.</text>
</comment>
<comment type="pathway">
    <text evidence="1">Amino-acid biosynthesis; L-methionine biosynthesis via salvage pathway; L-methionine from S-methyl-5-thio-alpha-D-ribose 1-phosphate: step 3/6.</text>
</comment>
<comment type="pathway">
    <text evidence="1">Amino-acid biosynthesis; L-methionine biosynthesis via salvage pathway; L-methionine from S-methyl-5-thio-alpha-D-ribose 1-phosphate: step 4/6.</text>
</comment>
<comment type="subunit">
    <text evidence="1">Monomer.</text>
</comment>
<comment type="similarity">
    <text evidence="1">Belongs to the HAD-like hydrolase superfamily. MasA/MtnC family.</text>
</comment>
<reference key="1">
    <citation type="journal article" date="2006" name="Proc. Natl. Acad. Sci. U.S.A.">
        <title>Genome reduction in Leptospira borgpetersenii reflects limited transmission potential.</title>
        <authorList>
            <person name="Bulach D.M."/>
            <person name="Zuerner R.L."/>
            <person name="Wilson P."/>
            <person name="Seemann T."/>
            <person name="McGrath A."/>
            <person name="Cullen P.A."/>
            <person name="Davis J."/>
            <person name="Johnson M."/>
            <person name="Kuczek E."/>
            <person name="Alt D.P."/>
            <person name="Peterson-Burch B."/>
            <person name="Coppel R.L."/>
            <person name="Rood J.I."/>
            <person name="Davies J.K."/>
            <person name="Adler B."/>
        </authorList>
    </citation>
    <scope>NUCLEOTIDE SEQUENCE [LARGE SCALE GENOMIC DNA]</scope>
    <source>
        <strain>L550</strain>
    </source>
</reference>